<accession>B1LXZ4</accession>
<comment type="function">
    <text evidence="1">Cell wall formation. Catalyzes the transfer of a GlcNAc subunit on undecaprenyl-pyrophosphoryl-MurNAc-pentapeptide (lipid intermediate I) to form undecaprenyl-pyrophosphoryl-MurNAc-(pentapeptide)GlcNAc (lipid intermediate II).</text>
</comment>
<comment type="catalytic activity">
    <reaction evidence="1">
        <text>di-trans,octa-cis-undecaprenyl diphospho-N-acetyl-alpha-D-muramoyl-L-alanyl-D-glutamyl-meso-2,6-diaminopimeloyl-D-alanyl-D-alanine + UDP-N-acetyl-alpha-D-glucosamine = di-trans,octa-cis-undecaprenyl diphospho-[N-acetyl-alpha-D-glucosaminyl-(1-&gt;4)]-N-acetyl-alpha-D-muramoyl-L-alanyl-D-glutamyl-meso-2,6-diaminopimeloyl-D-alanyl-D-alanine + UDP + H(+)</text>
        <dbReference type="Rhea" id="RHEA:31227"/>
        <dbReference type="ChEBI" id="CHEBI:15378"/>
        <dbReference type="ChEBI" id="CHEBI:57705"/>
        <dbReference type="ChEBI" id="CHEBI:58223"/>
        <dbReference type="ChEBI" id="CHEBI:61387"/>
        <dbReference type="ChEBI" id="CHEBI:61388"/>
        <dbReference type="EC" id="2.4.1.227"/>
    </reaction>
</comment>
<comment type="pathway">
    <text evidence="1">Cell wall biogenesis; peptidoglycan biosynthesis.</text>
</comment>
<comment type="subcellular location">
    <subcellularLocation>
        <location evidence="1">Cell inner membrane</location>
        <topology evidence="1">Peripheral membrane protein</topology>
        <orientation evidence="1">Cytoplasmic side</orientation>
    </subcellularLocation>
</comment>
<comment type="similarity">
    <text evidence="1">Belongs to the glycosyltransferase 28 family. MurG subfamily.</text>
</comment>
<keyword id="KW-0131">Cell cycle</keyword>
<keyword id="KW-0132">Cell division</keyword>
<keyword id="KW-0997">Cell inner membrane</keyword>
<keyword id="KW-1003">Cell membrane</keyword>
<keyword id="KW-0133">Cell shape</keyword>
<keyword id="KW-0961">Cell wall biogenesis/degradation</keyword>
<keyword id="KW-0328">Glycosyltransferase</keyword>
<keyword id="KW-0472">Membrane</keyword>
<keyword id="KW-0573">Peptidoglycan synthesis</keyword>
<keyword id="KW-0808">Transferase</keyword>
<reference key="1">
    <citation type="submission" date="2008-03" db="EMBL/GenBank/DDBJ databases">
        <title>Complete sequence of chromosome of Methylobacterium radiotolerans JCM 2831.</title>
        <authorList>
            <consortium name="US DOE Joint Genome Institute"/>
            <person name="Copeland A."/>
            <person name="Lucas S."/>
            <person name="Lapidus A."/>
            <person name="Glavina del Rio T."/>
            <person name="Dalin E."/>
            <person name="Tice H."/>
            <person name="Bruce D."/>
            <person name="Goodwin L."/>
            <person name="Pitluck S."/>
            <person name="Kiss H."/>
            <person name="Brettin T."/>
            <person name="Detter J.C."/>
            <person name="Han C."/>
            <person name="Kuske C.R."/>
            <person name="Schmutz J."/>
            <person name="Larimer F."/>
            <person name="Land M."/>
            <person name="Hauser L."/>
            <person name="Kyrpides N."/>
            <person name="Mikhailova N."/>
            <person name="Marx C.J."/>
            <person name="Richardson P."/>
        </authorList>
    </citation>
    <scope>NUCLEOTIDE SEQUENCE [LARGE SCALE GENOMIC DNA]</scope>
    <source>
        <strain>ATCC 27329 / DSM 1819 / JCM 2831 / NBRC 15690 / NCIMB 10815 / 0-1</strain>
    </source>
</reference>
<organism>
    <name type="scientific">Methylobacterium radiotolerans (strain ATCC 27329 / DSM 1819 / JCM 2831 / NBRC 15690 / NCIMB 10815 / 0-1)</name>
    <dbReference type="NCBI Taxonomy" id="426355"/>
    <lineage>
        <taxon>Bacteria</taxon>
        <taxon>Pseudomonadati</taxon>
        <taxon>Pseudomonadota</taxon>
        <taxon>Alphaproteobacteria</taxon>
        <taxon>Hyphomicrobiales</taxon>
        <taxon>Methylobacteriaceae</taxon>
        <taxon>Methylobacterium</taxon>
    </lineage>
</organism>
<sequence length="369" mass="38115">MTVFTPTILLCAGGTGGHLFPAESLAHALRARGIRVALATDARVDSIASEFPASEVVTIASATPSGRSPLKRAGAVLTLGRGFGVAAKEIRRINPAAIVGFGGYPTVPPVLAGQILRVPTILHEQNAVMGRANAFLARGARTIATGFKVVRGVPDKARAPRIHTGNPLRPAVIEAAKVPYPAFGPDDALRLLVFGGSQGARVMGEVVPEAIARLPDALRARLHLVQQVRPEDLTAVQNRYLAMGLAGIEAAPFFKDLPARMAASHLVVSRSGASTVSELAAIGRPAILVPLPGSLDQDQAANAATLDAIGAALAVKQPDFTPERLAAELTACFATPAKLTAAADAARSAGIHDAAERLAEVVVETAART</sequence>
<proteinExistence type="inferred from homology"/>
<dbReference type="EC" id="2.4.1.227" evidence="1"/>
<dbReference type="EMBL" id="CP001001">
    <property type="protein sequence ID" value="ACB24351.1"/>
    <property type="molecule type" value="Genomic_DNA"/>
</dbReference>
<dbReference type="RefSeq" id="WP_012319324.1">
    <property type="nucleotide sequence ID" value="NC_010505.1"/>
</dbReference>
<dbReference type="SMR" id="B1LXZ4"/>
<dbReference type="STRING" id="426355.Mrad2831_2356"/>
<dbReference type="CAZy" id="GT28">
    <property type="family name" value="Glycosyltransferase Family 28"/>
</dbReference>
<dbReference type="GeneID" id="6138388"/>
<dbReference type="KEGG" id="mrd:Mrad2831_2356"/>
<dbReference type="eggNOG" id="COG0707">
    <property type="taxonomic scope" value="Bacteria"/>
</dbReference>
<dbReference type="HOGENOM" id="CLU_037404_2_1_5"/>
<dbReference type="OrthoDB" id="9808936at2"/>
<dbReference type="UniPathway" id="UPA00219"/>
<dbReference type="Proteomes" id="UP000006589">
    <property type="component" value="Chromosome"/>
</dbReference>
<dbReference type="GO" id="GO:0005886">
    <property type="term" value="C:plasma membrane"/>
    <property type="evidence" value="ECO:0007669"/>
    <property type="project" value="UniProtKB-SubCell"/>
</dbReference>
<dbReference type="GO" id="GO:0051991">
    <property type="term" value="F:UDP-N-acetyl-D-glucosamine:N-acetylmuramoyl-L-alanyl-D-glutamyl-meso-2,6-diaminopimelyl-D-alanyl-D-alanine-diphosphoundecaprenol 4-beta-N-acetylglucosaminlytransferase activity"/>
    <property type="evidence" value="ECO:0007669"/>
    <property type="project" value="RHEA"/>
</dbReference>
<dbReference type="GO" id="GO:0050511">
    <property type="term" value="F:undecaprenyldiphospho-muramoylpentapeptide beta-N-acetylglucosaminyltransferase activity"/>
    <property type="evidence" value="ECO:0007669"/>
    <property type="project" value="UniProtKB-UniRule"/>
</dbReference>
<dbReference type="GO" id="GO:0005975">
    <property type="term" value="P:carbohydrate metabolic process"/>
    <property type="evidence" value="ECO:0007669"/>
    <property type="project" value="InterPro"/>
</dbReference>
<dbReference type="GO" id="GO:0051301">
    <property type="term" value="P:cell division"/>
    <property type="evidence" value="ECO:0007669"/>
    <property type="project" value="UniProtKB-KW"/>
</dbReference>
<dbReference type="GO" id="GO:0071555">
    <property type="term" value="P:cell wall organization"/>
    <property type="evidence" value="ECO:0007669"/>
    <property type="project" value="UniProtKB-KW"/>
</dbReference>
<dbReference type="GO" id="GO:0030259">
    <property type="term" value="P:lipid glycosylation"/>
    <property type="evidence" value="ECO:0007669"/>
    <property type="project" value="UniProtKB-UniRule"/>
</dbReference>
<dbReference type="GO" id="GO:0009252">
    <property type="term" value="P:peptidoglycan biosynthetic process"/>
    <property type="evidence" value="ECO:0007669"/>
    <property type="project" value="UniProtKB-UniRule"/>
</dbReference>
<dbReference type="GO" id="GO:0008360">
    <property type="term" value="P:regulation of cell shape"/>
    <property type="evidence" value="ECO:0007669"/>
    <property type="project" value="UniProtKB-KW"/>
</dbReference>
<dbReference type="CDD" id="cd03785">
    <property type="entry name" value="GT28_MurG"/>
    <property type="match status" value="1"/>
</dbReference>
<dbReference type="Gene3D" id="3.40.50.2000">
    <property type="entry name" value="Glycogen Phosphorylase B"/>
    <property type="match status" value="2"/>
</dbReference>
<dbReference type="HAMAP" id="MF_00033">
    <property type="entry name" value="MurG"/>
    <property type="match status" value="1"/>
</dbReference>
<dbReference type="InterPro" id="IPR006009">
    <property type="entry name" value="GlcNAc_MurG"/>
</dbReference>
<dbReference type="InterPro" id="IPR007235">
    <property type="entry name" value="Glyco_trans_28_C"/>
</dbReference>
<dbReference type="InterPro" id="IPR004276">
    <property type="entry name" value="GlycoTrans_28_N"/>
</dbReference>
<dbReference type="NCBIfam" id="TIGR01133">
    <property type="entry name" value="murG"/>
    <property type="match status" value="1"/>
</dbReference>
<dbReference type="PANTHER" id="PTHR21015:SF22">
    <property type="entry name" value="GLYCOSYLTRANSFERASE"/>
    <property type="match status" value="1"/>
</dbReference>
<dbReference type="PANTHER" id="PTHR21015">
    <property type="entry name" value="UDP-N-ACETYLGLUCOSAMINE--N-ACETYLMURAMYL-(PENTAPEPTIDE) PYROPHOSPHORYL-UNDECAPRENOL N-ACETYLGLUCOSAMINE TRANSFERASE 1"/>
    <property type="match status" value="1"/>
</dbReference>
<dbReference type="Pfam" id="PF04101">
    <property type="entry name" value="Glyco_tran_28_C"/>
    <property type="match status" value="1"/>
</dbReference>
<dbReference type="Pfam" id="PF03033">
    <property type="entry name" value="Glyco_transf_28"/>
    <property type="match status" value="1"/>
</dbReference>
<dbReference type="SUPFAM" id="SSF53756">
    <property type="entry name" value="UDP-Glycosyltransferase/glycogen phosphorylase"/>
    <property type="match status" value="1"/>
</dbReference>
<protein>
    <recommendedName>
        <fullName evidence="1">UDP-N-acetylglucosamine--N-acetylmuramyl-(pentapeptide) pyrophosphoryl-undecaprenol N-acetylglucosamine transferase</fullName>
        <ecNumber evidence="1">2.4.1.227</ecNumber>
    </recommendedName>
    <alternativeName>
        <fullName evidence="1">Undecaprenyl-PP-MurNAc-pentapeptide-UDPGlcNAc GlcNAc transferase</fullName>
    </alternativeName>
</protein>
<evidence type="ECO:0000255" key="1">
    <source>
        <dbReference type="HAMAP-Rule" id="MF_00033"/>
    </source>
</evidence>
<name>MURG_METRJ</name>
<feature type="chain" id="PRO_1000090448" description="UDP-N-acetylglucosamine--N-acetylmuramyl-(pentapeptide) pyrophosphoryl-undecaprenol N-acetylglucosamine transferase">
    <location>
        <begin position="1"/>
        <end position="369"/>
    </location>
</feature>
<feature type="binding site" evidence="1">
    <location>
        <begin position="15"/>
        <end position="17"/>
    </location>
    <ligand>
        <name>UDP-N-acetyl-alpha-D-glucosamine</name>
        <dbReference type="ChEBI" id="CHEBI:57705"/>
    </ligand>
</feature>
<feature type="binding site" evidence="1">
    <location>
        <position position="126"/>
    </location>
    <ligand>
        <name>UDP-N-acetyl-alpha-D-glucosamine</name>
        <dbReference type="ChEBI" id="CHEBI:57705"/>
    </ligand>
</feature>
<feature type="binding site" evidence="1">
    <location>
        <position position="169"/>
    </location>
    <ligand>
        <name>UDP-N-acetyl-alpha-D-glucosamine</name>
        <dbReference type="ChEBI" id="CHEBI:57705"/>
    </ligand>
</feature>
<feature type="binding site" evidence="1">
    <location>
        <position position="197"/>
    </location>
    <ligand>
        <name>UDP-N-acetyl-alpha-D-glucosamine</name>
        <dbReference type="ChEBI" id="CHEBI:57705"/>
    </ligand>
</feature>
<feature type="binding site" evidence="1">
    <location>
        <position position="299"/>
    </location>
    <ligand>
        <name>UDP-N-acetyl-alpha-D-glucosamine</name>
        <dbReference type="ChEBI" id="CHEBI:57705"/>
    </ligand>
</feature>
<gene>
    <name evidence="1" type="primary">murG</name>
    <name type="ordered locus">Mrad2831_2356</name>
</gene>